<accession>C0Q7I4</accession>
<organism>
    <name type="scientific">Salmonella paratyphi C (strain RKS4594)</name>
    <dbReference type="NCBI Taxonomy" id="476213"/>
    <lineage>
        <taxon>Bacteria</taxon>
        <taxon>Pseudomonadati</taxon>
        <taxon>Pseudomonadota</taxon>
        <taxon>Gammaproteobacteria</taxon>
        <taxon>Enterobacterales</taxon>
        <taxon>Enterobacteriaceae</taxon>
        <taxon>Salmonella</taxon>
    </lineage>
</organism>
<reference key="1">
    <citation type="journal article" date="2009" name="PLoS ONE">
        <title>Salmonella paratyphi C: genetic divergence from Salmonella choleraesuis and pathogenic convergence with Salmonella typhi.</title>
        <authorList>
            <person name="Liu W.-Q."/>
            <person name="Feng Y."/>
            <person name="Wang Y."/>
            <person name="Zou Q.-H."/>
            <person name="Chen F."/>
            <person name="Guo J.-T."/>
            <person name="Peng Y.-H."/>
            <person name="Jin Y."/>
            <person name="Li Y.-G."/>
            <person name="Hu S.-N."/>
            <person name="Johnston R.N."/>
            <person name="Liu G.-R."/>
            <person name="Liu S.-L."/>
        </authorList>
    </citation>
    <scope>NUCLEOTIDE SEQUENCE [LARGE SCALE GENOMIC DNA]</scope>
    <source>
        <strain>RKS4594</strain>
    </source>
</reference>
<name>SYME_SALPC</name>
<keyword id="KW-0963">Cytoplasm</keyword>
<keyword id="KW-0238">DNA-binding</keyword>
<keyword id="KW-0255">Endonuclease</keyword>
<keyword id="KW-0378">Hydrolase</keyword>
<keyword id="KW-0540">Nuclease</keyword>
<keyword id="KW-0694">RNA-binding</keyword>
<dbReference type="EC" id="3.1.-.-" evidence="1"/>
<dbReference type="EMBL" id="CP000857">
    <property type="protein sequence ID" value="ACN48707.1"/>
    <property type="molecule type" value="Genomic_DNA"/>
</dbReference>
<dbReference type="RefSeq" id="WP_000210980.1">
    <property type="nucleotide sequence ID" value="NC_012125.1"/>
</dbReference>
<dbReference type="KEGG" id="sei:SPC_4663"/>
<dbReference type="HOGENOM" id="CLU_151239_0_0_6"/>
<dbReference type="Proteomes" id="UP000001599">
    <property type="component" value="Chromosome"/>
</dbReference>
<dbReference type="GO" id="GO:0005737">
    <property type="term" value="C:cytoplasm"/>
    <property type="evidence" value="ECO:0007669"/>
    <property type="project" value="UniProtKB-SubCell"/>
</dbReference>
<dbReference type="GO" id="GO:0003677">
    <property type="term" value="F:DNA binding"/>
    <property type="evidence" value="ECO:0007669"/>
    <property type="project" value="UniProtKB-KW"/>
</dbReference>
<dbReference type="GO" id="GO:0003723">
    <property type="term" value="F:RNA binding"/>
    <property type="evidence" value="ECO:0007669"/>
    <property type="project" value="UniProtKB-KW"/>
</dbReference>
<dbReference type="GO" id="GO:0004521">
    <property type="term" value="F:RNA endonuclease activity"/>
    <property type="evidence" value="ECO:0007669"/>
    <property type="project" value="UniProtKB-UniRule"/>
</dbReference>
<dbReference type="GO" id="GO:0016070">
    <property type="term" value="P:RNA metabolic process"/>
    <property type="evidence" value="ECO:0007669"/>
    <property type="project" value="InterPro"/>
</dbReference>
<dbReference type="HAMAP" id="MF_01193">
    <property type="entry name" value="Endoribonucl_SymE"/>
    <property type="match status" value="1"/>
</dbReference>
<dbReference type="InterPro" id="IPR007159">
    <property type="entry name" value="SpoVT-AbrB_dom"/>
</dbReference>
<dbReference type="InterPro" id="IPR014944">
    <property type="entry name" value="Toxin_SymE-like"/>
</dbReference>
<dbReference type="InterPro" id="IPR020883">
    <property type="entry name" value="TypeI_TA_SymE"/>
</dbReference>
<dbReference type="NCBIfam" id="NF010128">
    <property type="entry name" value="PRK13605.1"/>
    <property type="match status" value="1"/>
</dbReference>
<dbReference type="Pfam" id="PF08845">
    <property type="entry name" value="SymE_toxin"/>
    <property type="match status" value="1"/>
</dbReference>
<dbReference type="PROSITE" id="PS51740">
    <property type="entry name" value="SPOVT_ABRB"/>
    <property type="match status" value="1"/>
</dbReference>
<protein>
    <recommendedName>
        <fullName evidence="1">Endoribonuclease SymE</fullName>
        <ecNumber evidence="1">3.1.-.-</ecNumber>
    </recommendedName>
</protein>
<comment type="function">
    <text evidence="1">Involved in the degradation and recycling of damaged RNA. It is itself a target for degradation by the ATP-dependent protease Lon.</text>
</comment>
<comment type="subcellular location">
    <subcellularLocation>
        <location evidence="1">Cytoplasm</location>
    </subcellularLocation>
</comment>
<comment type="similarity">
    <text evidence="1">Belongs to the SymE family.</text>
</comment>
<sequence length="110" mass="12253">MTTPHSIAESTDPEVFPANNRHLTVSYASRYPEYTRIPAITLKGQWLEDAGFTTGTQVDVRVMNGCIVLTAQQPQPEESELMQSLRQVSKLSARKQKQVQAFIDVMAGSK</sequence>
<proteinExistence type="inferred from homology"/>
<evidence type="ECO:0000255" key="1">
    <source>
        <dbReference type="HAMAP-Rule" id="MF_01193"/>
    </source>
</evidence>
<evidence type="ECO:0000255" key="2">
    <source>
        <dbReference type="PROSITE-ProRule" id="PRU01076"/>
    </source>
</evidence>
<feature type="chain" id="PRO_1000164508" description="Endoribonuclease SymE">
    <location>
        <begin position="1"/>
        <end position="110"/>
    </location>
</feature>
<feature type="domain" description="SpoVT-AbrB" evidence="2">
    <location>
        <begin position="29"/>
        <end position="74"/>
    </location>
</feature>
<gene>
    <name evidence="1" type="primary">symE</name>
    <name type="ordered locus">SPC_4663</name>
</gene>